<protein>
    <recommendedName>
        <fullName evidence="1">Phosphoribosylformylglycinamidine synthase subunit PurQ</fullName>
        <shortName evidence="1">FGAM synthase</shortName>
        <ecNumber evidence="1">6.3.5.3</ecNumber>
    </recommendedName>
    <alternativeName>
        <fullName evidence="1">Formylglycinamide ribonucleotide amidotransferase subunit I</fullName>
        <shortName evidence="1">FGAR amidotransferase I</shortName>
        <shortName evidence="1">FGAR-AT I</shortName>
    </alternativeName>
    <alternativeName>
        <fullName evidence="1">Glutaminase PurQ</fullName>
        <ecNumber evidence="1">3.5.1.2</ecNumber>
    </alternativeName>
    <alternativeName>
        <fullName evidence="1">Phosphoribosylformylglycinamidine synthase subunit I</fullName>
    </alternativeName>
</protein>
<proteinExistence type="inferred from homology"/>
<sequence>MRFGILVFPGTNCEMETFYVLREVVGVQADYVWHEARDLTPYDAVVIPGGFTYGDRVRSGALACRAPVMEAVAEFAARGGLVLGICNGFQILTEAGLLPGGFRPNAHGRYRCGWSRVRVENAATPFTLACRPGQVLKIPVSHGMGNYQADPDTLRALSENQQVLFRYCTPEGAVTPGANPNGSAENIAGIVNRTGNVAGVMPHPERATEQVLGSADGRLLFASMVQHLTGRVIRV</sequence>
<keyword id="KW-0067">ATP-binding</keyword>
<keyword id="KW-0963">Cytoplasm</keyword>
<keyword id="KW-0315">Glutamine amidotransferase</keyword>
<keyword id="KW-0378">Hydrolase</keyword>
<keyword id="KW-0436">Ligase</keyword>
<keyword id="KW-0547">Nucleotide-binding</keyword>
<keyword id="KW-0658">Purine biosynthesis</keyword>
<keyword id="KW-1185">Reference proteome</keyword>
<accession>Q67KF7</accession>
<organism>
    <name type="scientific">Symbiobacterium thermophilum (strain DSM 24528 / JCM 14929 / IAM 14863 / T)</name>
    <dbReference type="NCBI Taxonomy" id="292459"/>
    <lineage>
        <taxon>Bacteria</taxon>
        <taxon>Bacillati</taxon>
        <taxon>Bacillota</taxon>
        <taxon>Clostridia</taxon>
        <taxon>Eubacteriales</taxon>
        <taxon>Symbiobacteriaceae</taxon>
        <taxon>Symbiobacterium</taxon>
    </lineage>
</organism>
<name>PURQ_SYMTH</name>
<reference key="1">
    <citation type="journal article" date="2004" name="Nucleic Acids Res.">
        <title>Genome sequence of Symbiobacterium thermophilum, an uncultivable bacterium that depends on microbial commensalism.</title>
        <authorList>
            <person name="Ueda K."/>
            <person name="Yamashita A."/>
            <person name="Ishikawa J."/>
            <person name="Shimada M."/>
            <person name="Watsuji T."/>
            <person name="Morimura K."/>
            <person name="Ikeda H."/>
            <person name="Hattori M."/>
            <person name="Beppu T."/>
        </authorList>
    </citation>
    <scope>NUCLEOTIDE SEQUENCE [LARGE SCALE GENOMIC DNA]</scope>
    <source>
        <strain>DSM 24528 / JCM 14929 / IAM 14863 / T</strain>
    </source>
</reference>
<evidence type="ECO:0000255" key="1">
    <source>
        <dbReference type="HAMAP-Rule" id="MF_00421"/>
    </source>
</evidence>
<dbReference type="EC" id="6.3.5.3" evidence="1"/>
<dbReference type="EC" id="3.5.1.2" evidence="1"/>
<dbReference type="EMBL" id="AP006840">
    <property type="protein sequence ID" value="BAD41841.1"/>
    <property type="molecule type" value="Genomic_DNA"/>
</dbReference>
<dbReference type="RefSeq" id="WP_011196975.1">
    <property type="nucleotide sequence ID" value="NC_006177.1"/>
</dbReference>
<dbReference type="SMR" id="Q67KF7"/>
<dbReference type="STRING" id="292459.STH2856"/>
<dbReference type="KEGG" id="sth:STH2856"/>
<dbReference type="eggNOG" id="COG0047">
    <property type="taxonomic scope" value="Bacteria"/>
</dbReference>
<dbReference type="HOGENOM" id="CLU_001031_3_1_9"/>
<dbReference type="OrthoDB" id="9804441at2"/>
<dbReference type="UniPathway" id="UPA00074">
    <property type="reaction ID" value="UER00128"/>
</dbReference>
<dbReference type="Proteomes" id="UP000000417">
    <property type="component" value="Chromosome"/>
</dbReference>
<dbReference type="GO" id="GO:0005737">
    <property type="term" value="C:cytoplasm"/>
    <property type="evidence" value="ECO:0007669"/>
    <property type="project" value="UniProtKB-SubCell"/>
</dbReference>
<dbReference type="GO" id="GO:0005524">
    <property type="term" value="F:ATP binding"/>
    <property type="evidence" value="ECO:0007669"/>
    <property type="project" value="UniProtKB-KW"/>
</dbReference>
<dbReference type="GO" id="GO:0004359">
    <property type="term" value="F:glutaminase activity"/>
    <property type="evidence" value="ECO:0007669"/>
    <property type="project" value="UniProtKB-EC"/>
</dbReference>
<dbReference type="GO" id="GO:0004642">
    <property type="term" value="F:phosphoribosylformylglycinamidine synthase activity"/>
    <property type="evidence" value="ECO:0007669"/>
    <property type="project" value="UniProtKB-UniRule"/>
</dbReference>
<dbReference type="GO" id="GO:0006189">
    <property type="term" value="P:'de novo' IMP biosynthetic process"/>
    <property type="evidence" value="ECO:0007669"/>
    <property type="project" value="UniProtKB-UniRule"/>
</dbReference>
<dbReference type="CDD" id="cd01740">
    <property type="entry name" value="GATase1_FGAR_AT"/>
    <property type="match status" value="1"/>
</dbReference>
<dbReference type="Gene3D" id="3.40.50.880">
    <property type="match status" value="1"/>
</dbReference>
<dbReference type="HAMAP" id="MF_00421">
    <property type="entry name" value="PurQ"/>
    <property type="match status" value="1"/>
</dbReference>
<dbReference type="InterPro" id="IPR029062">
    <property type="entry name" value="Class_I_gatase-like"/>
</dbReference>
<dbReference type="InterPro" id="IPR010075">
    <property type="entry name" value="PRibForGlyAmidine_synth_PurQ"/>
</dbReference>
<dbReference type="NCBIfam" id="TIGR01737">
    <property type="entry name" value="FGAM_synth_I"/>
    <property type="match status" value="1"/>
</dbReference>
<dbReference type="NCBIfam" id="NF002957">
    <property type="entry name" value="PRK03619.1"/>
    <property type="match status" value="1"/>
</dbReference>
<dbReference type="PANTHER" id="PTHR47552">
    <property type="entry name" value="PHOSPHORIBOSYLFORMYLGLYCINAMIDINE SYNTHASE SUBUNIT PURQ"/>
    <property type="match status" value="1"/>
</dbReference>
<dbReference type="PANTHER" id="PTHR47552:SF1">
    <property type="entry name" value="PHOSPHORIBOSYLFORMYLGLYCINAMIDINE SYNTHASE SUBUNIT PURQ"/>
    <property type="match status" value="1"/>
</dbReference>
<dbReference type="Pfam" id="PF13507">
    <property type="entry name" value="GATase_5"/>
    <property type="match status" value="1"/>
</dbReference>
<dbReference type="PIRSF" id="PIRSF001586">
    <property type="entry name" value="FGAM_synth_I"/>
    <property type="match status" value="1"/>
</dbReference>
<dbReference type="SMART" id="SM01211">
    <property type="entry name" value="GATase_5"/>
    <property type="match status" value="1"/>
</dbReference>
<dbReference type="SUPFAM" id="SSF52317">
    <property type="entry name" value="Class I glutamine amidotransferase-like"/>
    <property type="match status" value="1"/>
</dbReference>
<dbReference type="PROSITE" id="PS51273">
    <property type="entry name" value="GATASE_TYPE_1"/>
    <property type="match status" value="1"/>
</dbReference>
<feature type="chain" id="PRO_0000100593" description="Phosphoribosylformylglycinamidine synthase subunit PurQ">
    <location>
        <begin position="1"/>
        <end position="235"/>
    </location>
</feature>
<feature type="domain" description="Glutamine amidotransferase type-1" evidence="1">
    <location>
        <begin position="4"/>
        <end position="234"/>
    </location>
</feature>
<feature type="active site" description="Nucleophile" evidence="1">
    <location>
        <position position="86"/>
    </location>
</feature>
<feature type="active site" evidence="1">
    <location>
        <position position="203"/>
    </location>
</feature>
<feature type="active site" evidence="1">
    <location>
        <position position="205"/>
    </location>
</feature>
<gene>
    <name evidence="1" type="primary">purQ</name>
    <name type="ordered locus">STH2856</name>
</gene>
<comment type="function">
    <text evidence="1">Part of the phosphoribosylformylglycinamidine synthase complex involved in the purines biosynthetic pathway. Catalyzes the ATP-dependent conversion of formylglycinamide ribonucleotide (FGAR) and glutamine to yield formylglycinamidine ribonucleotide (FGAM) and glutamate. The FGAM synthase complex is composed of three subunits. PurQ produces an ammonia molecule by converting glutamine to glutamate. PurL transfers the ammonia molecule to FGAR to form FGAM in an ATP-dependent manner. PurS interacts with PurQ and PurL and is thought to assist in the transfer of the ammonia molecule from PurQ to PurL.</text>
</comment>
<comment type="catalytic activity">
    <reaction evidence="1">
        <text>N(2)-formyl-N(1)-(5-phospho-beta-D-ribosyl)glycinamide + L-glutamine + ATP + H2O = 2-formamido-N(1)-(5-O-phospho-beta-D-ribosyl)acetamidine + L-glutamate + ADP + phosphate + H(+)</text>
        <dbReference type="Rhea" id="RHEA:17129"/>
        <dbReference type="ChEBI" id="CHEBI:15377"/>
        <dbReference type="ChEBI" id="CHEBI:15378"/>
        <dbReference type="ChEBI" id="CHEBI:29985"/>
        <dbReference type="ChEBI" id="CHEBI:30616"/>
        <dbReference type="ChEBI" id="CHEBI:43474"/>
        <dbReference type="ChEBI" id="CHEBI:58359"/>
        <dbReference type="ChEBI" id="CHEBI:147286"/>
        <dbReference type="ChEBI" id="CHEBI:147287"/>
        <dbReference type="ChEBI" id="CHEBI:456216"/>
        <dbReference type="EC" id="6.3.5.3"/>
    </reaction>
</comment>
<comment type="catalytic activity">
    <reaction evidence="1">
        <text>L-glutamine + H2O = L-glutamate + NH4(+)</text>
        <dbReference type="Rhea" id="RHEA:15889"/>
        <dbReference type="ChEBI" id="CHEBI:15377"/>
        <dbReference type="ChEBI" id="CHEBI:28938"/>
        <dbReference type="ChEBI" id="CHEBI:29985"/>
        <dbReference type="ChEBI" id="CHEBI:58359"/>
        <dbReference type="EC" id="3.5.1.2"/>
    </reaction>
</comment>
<comment type="pathway">
    <text evidence="1">Purine metabolism; IMP biosynthesis via de novo pathway; 5-amino-1-(5-phospho-D-ribosyl)imidazole from N(2)-formyl-N(1)-(5-phospho-D-ribosyl)glycinamide: step 1/2.</text>
</comment>
<comment type="subunit">
    <text evidence="1">Part of the FGAM synthase complex composed of 1 PurL, 1 PurQ and 2 PurS subunits.</text>
</comment>
<comment type="subcellular location">
    <subcellularLocation>
        <location evidence="1">Cytoplasm</location>
    </subcellularLocation>
</comment>